<dbReference type="EMBL" id="CU468230">
    <property type="protein sequence ID" value="CAO99819.1"/>
    <property type="molecule type" value="Genomic_DNA"/>
</dbReference>
<dbReference type="SMR" id="B0VQS3"/>
<dbReference type="KEGG" id="abm:ABSDF0428"/>
<dbReference type="HOGENOM" id="CLU_083987_3_3_6"/>
<dbReference type="Proteomes" id="UP000001741">
    <property type="component" value="Chromosome"/>
</dbReference>
<dbReference type="GO" id="GO:0022625">
    <property type="term" value="C:cytosolic large ribosomal subunit"/>
    <property type="evidence" value="ECO:0007669"/>
    <property type="project" value="TreeGrafter"/>
</dbReference>
<dbReference type="GO" id="GO:0019843">
    <property type="term" value="F:rRNA binding"/>
    <property type="evidence" value="ECO:0007669"/>
    <property type="project" value="UniProtKB-UniRule"/>
</dbReference>
<dbReference type="GO" id="GO:0003735">
    <property type="term" value="F:structural constituent of ribosome"/>
    <property type="evidence" value="ECO:0007669"/>
    <property type="project" value="InterPro"/>
</dbReference>
<dbReference type="GO" id="GO:0006412">
    <property type="term" value="P:translation"/>
    <property type="evidence" value="ECO:0007669"/>
    <property type="project" value="UniProtKB-UniRule"/>
</dbReference>
<dbReference type="CDD" id="cd00336">
    <property type="entry name" value="Ribosomal_L22"/>
    <property type="match status" value="1"/>
</dbReference>
<dbReference type="FunFam" id="3.90.470.10:FF:000001">
    <property type="entry name" value="50S ribosomal protein L22"/>
    <property type="match status" value="1"/>
</dbReference>
<dbReference type="Gene3D" id="3.90.470.10">
    <property type="entry name" value="Ribosomal protein L22/L17"/>
    <property type="match status" value="1"/>
</dbReference>
<dbReference type="HAMAP" id="MF_01331_B">
    <property type="entry name" value="Ribosomal_uL22_B"/>
    <property type="match status" value="1"/>
</dbReference>
<dbReference type="InterPro" id="IPR001063">
    <property type="entry name" value="Ribosomal_uL22"/>
</dbReference>
<dbReference type="InterPro" id="IPR005727">
    <property type="entry name" value="Ribosomal_uL22_bac/chlpt-type"/>
</dbReference>
<dbReference type="InterPro" id="IPR047867">
    <property type="entry name" value="Ribosomal_uL22_bac/org-type"/>
</dbReference>
<dbReference type="InterPro" id="IPR018260">
    <property type="entry name" value="Ribosomal_uL22_CS"/>
</dbReference>
<dbReference type="InterPro" id="IPR036394">
    <property type="entry name" value="Ribosomal_uL22_sf"/>
</dbReference>
<dbReference type="NCBIfam" id="TIGR01044">
    <property type="entry name" value="rplV_bact"/>
    <property type="match status" value="1"/>
</dbReference>
<dbReference type="PANTHER" id="PTHR13501">
    <property type="entry name" value="CHLOROPLAST 50S RIBOSOMAL PROTEIN L22-RELATED"/>
    <property type="match status" value="1"/>
</dbReference>
<dbReference type="PANTHER" id="PTHR13501:SF8">
    <property type="entry name" value="LARGE RIBOSOMAL SUBUNIT PROTEIN UL22M"/>
    <property type="match status" value="1"/>
</dbReference>
<dbReference type="Pfam" id="PF00237">
    <property type="entry name" value="Ribosomal_L22"/>
    <property type="match status" value="1"/>
</dbReference>
<dbReference type="SUPFAM" id="SSF54843">
    <property type="entry name" value="Ribosomal protein L22"/>
    <property type="match status" value="1"/>
</dbReference>
<dbReference type="PROSITE" id="PS00464">
    <property type="entry name" value="RIBOSOMAL_L22"/>
    <property type="match status" value="1"/>
</dbReference>
<evidence type="ECO:0000255" key="1">
    <source>
        <dbReference type="HAMAP-Rule" id="MF_01331"/>
    </source>
</evidence>
<evidence type="ECO:0000305" key="2"/>
<feature type="chain" id="PRO_1000142215" description="Large ribosomal subunit protein uL22">
    <location>
        <begin position="1"/>
        <end position="110"/>
    </location>
</feature>
<protein>
    <recommendedName>
        <fullName evidence="1">Large ribosomal subunit protein uL22</fullName>
    </recommendedName>
    <alternativeName>
        <fullName evidence="2">50S ribosomal protein L22</fullName>
    </alternativeName>
</protein>
<sequence>MMEVTAKLRGAAISAQKARLVADLIRGKSVAHALNILNFSNKKAAVLVKKALESAIANAEHNNSLDVDDLKVSTIYVDEGMSLKRIMPRAKGRADRITKRTCHITVKVGV</sequence>
<proteinExistence type="inferred from homology"/>
<organism>
    <name type="scientific">Acinetobacter baumannii (strain SDF)</name>
    <dbReference type="NCBI Taxonomy" id="509170"/>
    <lineage>
        <taxon>Bacteria</taxon>
        <taxon>Pseudomonadati</taxon>
        <taxon>Pseudomonadota</taxon>
        <taxon>Gammaproteobacteria</taxon>
        <taxon>Moraxellales</taxon>
        <taxon>Moraxellaceae</taxon>
        <taxon>Acinetobacter</taxon>
        <taxon>Acinetobacter calcoaceticus/baumannii complex</taxon>
    </lineage>
</organism>
<comment type="function">
    <text evidence="1">This protein binds specifically to 23S rRNA; its binding is stimulated by other ribosomal proteins, e.g. L4, L17, and L20. It is important during the early stages of 50S assembly. It makes multiple contacts with different domains of the 23S rRNA in the assembled 50S subunit and ribosome (By similarity).</text>
</comment>
<comment type="function">
    <text evidence="1">The globular domain of the protein is located near the polypeptide exit tunnel on the outside of the subunit, while an extended beta-hairpin is found that lines the wall of the exit tunnel in the center of the 70S ribosome.</text>
</comment>
<comment type="subunit">
    <text evidence="1">Part of the 50S ribosomal subunit.</text>
</comment>
<comment type="similarity">
    <text evidence="1">Belongs to the universal ribosomal protein uL22 family.</text>
</comment>
<keyword id="KW-0687">Ribonucleoprotein</keyword>
<keyword id="KW-0689">Ribosomal protein</keyword>
<keyword id="KW-0694">RNA-binding</keyword>
<keyword id="KW-0699">rRNA-binding</keyword>
<accession>B0VQS3</accession>
<gene>
    <name evidence="1" type="primary">rplV</name>
    <name type="ordered locus">ABSDF0428</name>
</gene>
<name>RL22_ACIBS</name>
<reference key="1">
    <citation type="journal article" date="2008" name="PLoS ONE">
        <title>Comparative analysis of Acinetobacters: three genomes for three lifestyles.</title>
        <authorList>
            <person name="Vallenet D."/>
            <person name="Nordmann P."/>
            <person name="Barbe V."/>
            <person name="Poirel L."/>
            <person name="Mangenot S."/>
            <person name="Bataille E."/>
            <person name="Dossat C."/>
            <person name="Gas S."/>
            <person name="Kreimeyer A."/>
            <person name="Lenoble P."/>
            <person name="Oztas S."/>
            <person name="Poulain J."/>
            <person name="Segurens B."/>
            <person name="Robert C."/>
            <person name="Abergel C."/>
            <person name="Claverie J.-M."/>
            <person name="Raoult D."/>
            <person name="Medigue C."/>
            <person name="Weissenbach J."/>
            <person name="Cruveiller S."/>
        </authorList>
    </citation>
    <scope>NUCLEOTIDE SEQUENCE [LARGE SCALE GENOMIC DNA]</scope>
    <source>
        <strain>SDF</strain>
    </source>
</reference>